<accession>Q80HV3</accession>
<sequence length="187" mass="21879">METLTSSSQSLISSPMSKKDYSSEIICAFDIGAKNPARTVLEVKDNSVRVLDISKLDWSSDWERRIAKDLSQYEYTTVLLERQPRRSPYVKFIYFIKGFLYHTSAAKVICVSPVMSGNSYRDRKKRSVEAFLDWMDTFGLRDSVPDRRKLDDVADSFNLAMRYVLDKWNTNYTPYNRCKSRNYIKKM</sequence>
<comment type="function">
    <text evidence="1 2 3">Plays a role in DNA replication by cleaving viral DNA concatamers to yield unit-length viral genomes. The concatamer junctions contain inverted repeat sequences that can be extruded as cruciforms, yielding Holliday junctions that A22 protein cleaves.</text>
</comment>
<comment type="cofactor">
    <cofactor evidence="3">
        <name>Mg(2+)</name>
        <dbReference type="ChEBI" id="CHEBI:18420"/>
    </cofactor>
    <text evidence="3">Binds 1 Mg(2+) ion per subunit.</text>
</comment>
<comment type="similarity">
    <text evidence="4">Belongs to the RuvC family. Poxviruses-type subfamily.</text>
</comment>
<comment type="caution">
    <text evidence="5">Was initially reported be palmyoylated (PubMed:11017799). However, additional data are required to confirm this result.</text>
</comment>
<name>RUVV_VACCW</name>
<organism>
    <name type="scientific">Vaccinia virus (strain Western Reserve)</name>
    <name type="common">VACV</name>
    <name type="synonym">Vaccinia virus (strain WR)</name>
    <dbReference type="NCBI Taxonomy" id="10254"/>
    <lineage>
        <taxon>Viruses</taxon>
        <taxon>Varidnaviria</taxon>
        <taxon>Bamfordvirae</taxon>
        <taxon>Nucleocytoviricota</taxon>
        <taxon>Pokkesviricetes</taxon>
        <taxon>Chitovirales</taxon>
        <taxon>Poxviridae</taxon>
        <taxon>Chordopoxvirinae</taxon>
        <taxon>Orthopoxvirus</taxon>
        <taxon>Vaccinia virus</taxon>
    </lineage>
</organism>
<reference key="1">
    <citation type="submission" date="2003-02" db="EMBL/GenBank/DDBJ databases">
        <title>Sequencing of the coding region of Vaccinia-WR to an average 9-fold redundancy and an error rate of 0.16/10kb.</title>
        <authorList>
            <person name="Esposito J.J."/>
            <person name="Frace A.M."/>
            <person name="Sammons S.A."/>
            <person name="Olsen-Rasmussen M."/>
            <person name="Osborne J."/>
            <person name="Wohlhueter R."/>
        </authorList>
    </citation>
    <scope>NUCLEOTIDE SEQUENCE [LARGE SCALE GENOMIC DNA]</scope>
</reference>
<reference key="2">
    <citation type="journal article" date="2000" name="Virology">
        <title>Identification and analysis of vaccinia virus palmitylproteins.</title>
        <authorList>
            <person name="Grosenbach D.W."/>
            <person name="Hansen S.G."/>
            <person name="Hruby D.E."/>
        </authorList>
    </citation>
    <scope>PALMITOYLATION</scope>
</reference>
<reference key="3">
    <citation type="journal article" date="2000" name="Proc. Natl. Acad. Sci. U.S.A.">
        <title>Bacterial-type DNA holliday junction resolvases in eukaryotic viruses.</title>
        <authorList>
            <person name="Garcia A.D."/>
            <person name="Aravind L."/>
            <person name="Koonin E.V."/>
            <person name="Moss B."/>
        </authorList>
    </citation>
    <scope>FUNCTION</scope>
</reference>
<reference key="4">
    <citation type="journal article" date="2001" name="J. Virol.">
        <title>Repression of vaccinia virus Holliday junction resolvase inhibits processing of viral DNA into unit-length genomes.</title>
        <authorList>
            <person name="Garcia A.D."/>
            <person name="Moss B."/>
        </authorList>
    </citation>
    <scope>FUNCTION</scope>
</reference>
<reference key="5">
    <citation type="journal article" date="2006" name="Virology">
        <title>DNA cleavage by the A22R resolvase of vaccinia virus.</title>
        <authorList>
            <person name="Culyba M.J."/>
            <person name="Harrison J.E."/>
            <person name="Hwang Y."/>
            <person name="Bushman F.D."/>
        </authorList>
    </citation>
    <scope>FUNCTION</scope>
</reference>
<dbReference type="EC" id="3.1.-.-"/>
<dbReference type="EMBL" id="AY243312">
    <property type="protein sequence ID" value="AAO89421.1"/>
    <property type="molecule type" value="Genomic_DNA"/>
</dbReference>
<dbReference type="RefSeq" id="YP_233024.1">
    <property type="nucleotide sequence ID" value="NC_006998.1"/>
</dbReference>
<dbReference type="SMR" id="Q80HV3"/>
<dbReference type="DNASU" id="3707672"/>
<dbReference type="GeneID" id="3707672"/>
<dbReference type="KEGG" id="vg:3707672"/>
<dbReference type="Proteomes" id="UP000000344">
    <property type="component" value="Genome"/>
</dbReference>
<dbReference type="GO" id="GO:0000400">
    <property type="term" value="F:four-way junction DNA binding"/>
    <property type="evidence" value="ECO:0007669"/>
    <property type="project" value="InterPro"/>
</dbReference>
<dbReference type="GO" id="GO:0000287">
    <property type="term" value="F:magnesium ion binding"/>
    <property type="evidence" value="ECO:0007669"/>
    <property type="project" value="InterPro"/>
</dbReference>
<dbReference type="GO" id="GO:0004518">
    <property type="term" value="F:nuclease activity"/>
    <property type="evidence" value="ECO:0007669"/>
    <property type="project" value="UniProtKB-KW"/>
</dbReference>
<dbReference type="GO" id="GO:0006310">
    <property type="term" value="P:DNA recombination"/>
    <property type="evidence" value="ECO:0007669"/>
    <property type="project" value="UniProtKB-KW"/>
</dbReference>
<dbReference type="GO" id="GO:0006281">
    <property type="term" value="P:DNA repair"/>
    <property type="evidence" value="ECO:0007669"/>
    <property type="project" value="UniProtKB-KW"/>
</dbReference>
<dbReference type="InterPro" id="IPR006932">
    <property type="entry name" value="HJ-resolvase_A22"/>
</dbReference>
<dbReference type="InterPro" id="IPR012337">
    <property type="entry name" value="RNaseH-like_sf"/>
</dbReference>
<dbReference type="Pfam" id="PF04848">
    <property type="entry name" value="Pox_A22"/>
    <property type="match status" value="1"/>
</dbReference>
<dbReference type="SUPFAM" id="SSF53098">
    <property type="entry name" value="Ribonuclease H-like"/>
    <property type="match status" value="1"/>
</dbReference>
<organismHost>
    <name type="scientific">Bos taurus</name>
    <name type="common">Bovine</name>
    <dbReference type="NCBI Taxonomy" id="9913"/>
</organismHost>
<protein>
    <recommendedName>
        <fullName>Resolvase OPG149</fullName>
        <ecNumber>3.1.-.-</ecNumber>
    </recommendedName>
    <alternativeName>
        <fullName>DNA holliday junction resolvase A22</fullName>
    </alternativeName>
</protein>
<gene>
    <name type="primary">OPG149</name>
    <name type="ordered locus">VACWR142</name>
    <name type="ORF">A22R</name>
</gene>
<feature type="chain" id="PRO_0000183157" description="Resolvase OPG149">
    <location>
        <begin position="1"/>
        <end position="187"/>
    </location>
</feature>
<proteinExistence type="evidence at protein level"/>
<evidence type="ECO:0000269" key="1">
    <source>
    </source>
</evidence>
<evidence type="ECO:0000269" key="2">
    <source>
    </source>
</evidence>
<evidence type="ECO:0000269" key="3">
    <source>
    </source>
</evidence>
<evidence type="ECO:0000305" key="4"/>
<evidence type="ECO:0000305" key="5">
    <source>
    </source>
</evidence>
<keyword id="KW-0227">DNA damage</keyword>
<keyword id="KW-0233">DNA recombination</keyword>
<keyword id="KW-0234">DNA repair</keyword>
<keyword id="KW-0378">Hydrolase</keyword>
<keyword id="KW-0460">Magnesium</keyword>
<keyword id="KW-0540">Nuclease</keyword>
<keyword id="KW-0597">Phosphoprotein</keyword>
<keyword id="KW-1185">Reference proteome</keyword>